<evidence type="ECO:0000255" key="1">
    <source>
        <dbReference type="HAMAP-Rule" id="MF_00131"/>
    </source>
</evidence>
<gene>
    <name evidence="1" type="primary">trpA</name>
    <name type="ordered locus">Sama_2134</name>
</gene>
<reference key="1">
    <citation type="submission" date="2006-12" db="EMBL/GenBank/DDBJ databases">
        <title>Complete sequence of Shewanella amazonensis SB2B.</title>
        <authorList>
            <consortium name="US DOE Joint Genome Institute"/>
            <person name="Copeland A."/>
            <person name="Lucas S."/>
            <person name="Lapidus A."/>
            <person name="Barry K."/>
            <person name="Detter J.C."/>
            <person name="Glavina del Rio T."/>
            <person name="Hammon N."/>
            <person name="Israni S."/>
            <person name="Dalin E."/>
            <person name="Tice H."/>
            <person name="Pitluck S."/>
            <person name="Munk A.C."/>
            <person name="Brettin T."/>
            <person name="Bruce D."/>
            <person name="Han C."/>
            <person name="Tapia R."/>
            <person name="Gilna P."/>
            <person name="Schmutz J."/>
            <person name="Larimer F."/>
            <person name="Land M."/>
            <person name="Hauser L."/>
            <person name="Kyrpides N."/>
            <person name="Mikhailova N."/>
            <person name="Fredrickson J."/>
            <person name="Richardson P."/>
        </authorList>
    </citation>
    <scope>NUCLEOTIDE SEQUENCE [LARGE SCALE GENOMIC DNA]</scope>
    <source>
        <strain>ATCC BAA-1098 / SB2B</strain>
    </source>
</reference>
<organism>
    <name type="scientific">Shewanella amazonensis (strain ATCC BAA-1098 / SB2B)</name>
    <dbReference type="NCBI Taxonomy" id="326297"/>
    <lineage>
        <taxon>Bacteria</taxon>
        <taxon>Pseudomonadati</taxon>
        <taxon>Pseudomonadota</taxon>
        <taxon>Gammaproteobacteria</taxon>
        <taxon>Alteromonadales</taxon>
        <taxon>Shewanellaceae</taxon>
        <taxon>Shewanella</taxon>
    </lineage>
</organism>
<dbReference type="EC" id="4.2.1.20" evidence="1"/>
<dbReference type="EMBL" id="CP000507">
    <property type="protein sequence ID" value="ABM00340.1"/>
    <property type="molecule type" value="Genomic_DNA"/>
</dbReference>
<dbReference type="RefSeq" id="WP_011760247.1">
    <property type="nucleotide sequence ID" value="NC_008700.1"/>
</dbReference>
<dbReference type="SMR" id="A1S7I3"/>
<dbReference type="STRING" id="326297.Sama_2134"/>
<dbReference type="KEGG" id="saz:Sama_2134"/>
<dbReference type="eggNOG" id="COG0159">
    <property type="taxonomic scope" value="Bacteria"/>
</dbReference>
<dbReference type="HOGENOM" id="CLU_016734_0_4_6"/>
<dbReference type="OrthoDB" id="9804578at2"/>
<dbReference type="UniPathway" id="UPA00035">
    <property type="reaction ID" value="UER00044"/>
</dbReference>
<dbReference type="Proteomes" id="UP000009175">
    <property type="component" value="Chromosome"/>
</dbReference>
<dbReference type="GO" id="GO:0005829">
    <property type="term" value="C:cytosol"/>
    <property type="evidence" value="ECO:0007669"/>
    <property type="project" value="TreeGrafter"/>
</dbReference>
<dbReference type="GO" id="GO:0004834">
    <property type="term" value="F:tryptophan synthase activity"/>
    <property type="evidence" value="ECO:0007669"/>
    <property type="project" value="UniProtKB-UniRule"/>
</dbReference>
<dbReference type="CDD" id="cd04724">
    <property type="entry name" value="Tryptophan_synthase_alpha"/>
    <property type="match status" value="1"/>
</dbReference>
<dbReference type="FunFam" id="3.20.20.70:FF:000037">
    <property type="entry name" value="Tryptophan synthase alpha chain"/>
    <property type="match status" value="1"/>
</dbReference>
<dbReference type="Gene3D" id="3.20.20.70">
    <property type="entry name" value="Aldolase class I"/>
    <property type="match status" value="1"/>
</dbReference>
<dbReference type="HAMAP" id="MF_00131">
    <property type="entry name" value="Trp_synth_alpha"/>
    <property type="match status" value="1"/>
</dbReference>
<dbReference type="InterPro" id="IPR013785">
    <property type="entry name" value="Aldolase_TIM"/>
</dbReference>
<dbReference type="InterPro" id="IPR011060">
    <property type="entry name" value="RibuloseP-bd_barrel"/>
</dbReference>
<dbReference type="InterPro" id="IPR018204">
    <property type="entry name" value="Trp_synthase_alpha_AS"/>
</dbReference>
<dbReference type="InterPro" id="IPR002028">
    <property type="entry name" value="Trp_synthase_suA"/>
</dbReference>
<dbReference type="NCBIfam" id="TIGR00262">
    <property type="entry name" value="trpA"/>
    <property type="match status" value="1"/>
</dbReference>
<dbReference type="PANTHER" id="PTHR43406:SF1">
    <property type="entry name" value="TRYPTOPHAN SYNTHASE ALPHA CHAIN, CHLOROPLASTIC"/>
    <property type="match status" value="1"/>
</dbReference>
<dbReference type="PANTHER" id="PTHR43406">
    <property type="entry name" value="TRYPTOPHAN SYNTHASE, ALPHA CHAIN"/>
    <property type="match status" value="1"/>
</dbReference>
<dbReference type="Pfam" id="PF00290">
    <property type="entry name" value="Trp_syntA"/>
    <property type="match status" value="1"/>
</dbReference>
<dbReference type="SUPFAM" id="SSF51366">
    <property type="entry name" value="Ribulose-phoshate binding barrel"/>
    <property type="match status" value="1"/>
</dbReference>
<dbReference type="PROSITE" id="PS00167">
    <property type="entry name" value="TRP_SYNTHASE_ALPHA"/>
    <property type="match status" value="1"/>
</dbReference>
<sequence length="266" mass="27426">MNRYSNAFARLKAGSRGAFVPFVTLGDPGIDESLAIIDALVEGGADCLELGFPFSDPLADGPVIQGANIRALAAGTTPDTCFKMIEQIRAKYPELPIGLLLYANLVFANGIEAFYQRAKAAGVDSVLIADVPAEESAPFVAAARAEGIAPIFIAPPNASADTLRLVASLGEGYTYLLSRAGVTGADNKAGMPLDSVLSALKEFNAPPPLLGFGIAEPSQVQEAIAAGAAGAISGSAVVKRIEALKDDMPKLLTELKSFASAMKAAT</sequence>
<proteinExistence type="inferred from homology"/>
<accession>A1S7I3</accession>
<keyword id="KW-0028">Amino-acid biosynthesis</keyword>
<keyword id="KW-0057">Aromatic amino acid biosynthesis</keyword>
<keyword id="KW-0456">Lyase</keyword>
<keyword id="KW-1185">Reference proteome</keyword>
<keyword id="KW-0822">Tryptophan biosynthesis</keyword>
<protein>
    <recommendedName>
        <fullName evidence="1">Tryptophan synthase alpha chain</fullName>
        <ecNumber evidence="1">4.2.1.20</ecNumber>
    </recommendedName>
</protein>
<feature type="chain" id="PRO_1000018277" description="Tryptophan synthase alpha chain">
    <location>
        <begin position="1"/>
        <end position="266"/>
    </location>
</feature>
<feature type="active site" description="Proton acceptor" evidence="1">
    <location>
        <position position="49"/>
    </location>
</feature>
<feature type="active site" description="Proton acceptor" evidence="1">
    <location>
        <position position="60"/>
    </location>
</feature>
<name>TRPA_SHEAM</name>
<comment type="function">
    <text evidence="1">The alpha subunit is responsible for the aldol cleavage of indoleglycerol phosphate to indole and glyceraldehyde 3-phosphate.</text>
</comment>
<comment type="catalytic activity">
    <reaction evidence="1">
        <text>(1S,2R)-1-C-(indol-3-yl)glycerol 3-phosphate + L-serine = D-glyceraldehyde 3-phosphate + L-tryptophan + H2O</text>
        <dbReference type="Rhea" id="RHEA:10532"/>
        <dbReference type="ChEBI" id="CHEBI:15377"/>
        <dbReference type="ChEBI" id="CHEBI:33384"/>
        <dbReference type="ChEBI" id="CHEBI:57912"/>
        <dbReference type="ChEBI" id="CHEBI:58866"/>
        <dbReference type="ChEBI" id="CHEBI:59776"/>
        <dbReference type="EC" id="4.2.1.20"/>
    </reaction>
</comment>
<comment type="pathway">
    <text evidence="1">Amino-acid biosynthesis; L-tryptophan biosynthesis; L-tryptophan from chorismate: step 5/5.</text>
</comment>
<comment type="subunit">
    <text evidence="1">Tetramer of two alpha and two beta chains.</text>
</comment>
<comment type="similarity">
    <text evidence="1">Belongs to the TrpA family.</text>
</comment>